<comment type="function">
    <text evidence="1">Substrate-recognition component of a DCX (DDB1-CUL4-X-box) E3 ubiquitin-protein ligase complex of the DesCEND (destruction via C-end degrons) pathway, which recognizes a C-degron located at the extreme C terminus of target proteins, leading to their ubiquitination and degradation. The C-degron recognized by the DesCEND pathway is usually a motif of less than ten residues and can be present in full-length proteins, truncated proteins or proteolytically cleaved forms. The DCX(DCAF12) complex specifically recognizes proteins with a diglutamate (Glu-Glu) at the C-terminus leading to their ubiquitination and degradation. Also directly recognizes the C-terminal glutamate-leucine (Glu-Leu) degron as an alternative degron in proteins leading to their ubiquitination and degradation.</text>
</comment>
<comment type="pathway">
    <text evidence="1">Protein modification; protein ubiquitination.</text>
</comment>
<comment type="subunit">
    <text evidence="1">Component of the DCX(DCAF12) E3 ubiquitin ligase complex, at least composed of cul4 (cul4a or cul4b), ddb1, dcaf12 and rbx1.</text>
</comment>
<comment type="subcellular location">
    <subcellularLocation>
        <location evidence="1">Cytoplasm</location>
    </subcellularLocation>
    <subcellularLocation>
        <location evidence="1">Cytoplasm</location>
        <location evidence="1">Cytoskeleton</location>
        <location evidence="1">Microtubule organizing center</location>
        <location evidence="1">Centrosome</location>
    </subcellularLocation>
    <subcellularLocation>
        <location evidence="1">Nucleus</location>
    </subcellularLocation>
</comment>
<comment type="similarity">
    <text evidence="3">Belongs to the WD repeat DCAF12 family.</text>
</comment>
<feature type="chain" id="PRO_0000306846" description="DDB1- and CUL4-associated factor 12-B">
    <location>
        <begin position="1"/>
        <end position="442"/>
    </location>
</feature>
<feature type="repeat" description="WD 1">
    <location>
        <begin position="132"/>
        <end position="173"/>
    </location>
</feature>
<feature type="repeat" description="WD 2">
    <location>
        <begin position="177"/>
        <end position="215"/>
    </location>
</feature>
<feature type="repeat" description="WD 3">
    <location>
        <begin position="245"/>
        <end position="284"/>
    </location>
</feature>
<feature type="repeat" description="WD 4">
    <location>
        <begin position="333"/>
        <end position="370"/>
    </location>
</feature>
<feature type="region of interest" description="Disordered" evidence="2">
    <location>
        <begin position="1"/>
        <end position="31"/>
    </location>
</feature>
<feature type="compositionally biased region" description="Basic residues" evidence="2">
    <location>
        <begin position="1"/>
        <end position="13"/>
    </location>
</feature>
<sequence length="442" mass="49325">MTRRPVSRKRRATHGTGPGEQSDWDHSAHKRKRLQPEKKSLVFYLKSRELKPHNDSTYLHLLRGHAACTLPGILSEREFHLGNLNKVFASQWLNHRQVVCGTKCNTLFVVDIQTGQITKIPILKDREPISGSHQSCGIHAIEINPSRTLLATGGENPNSIAVYRLPTLDPVCVGDGGHNDWIFSIAWISDTMAVSGSRDGFMALWEMTDEVVNKRDFQHGLSRVPVYSHISHKALKDIPKESSNPVNCKVRALAFNGNNKELGAVSLDGFFHLWKAEQTLSKLLSTKLPFCRENVCLAYGLEWSLYAVGSQAHVSFLDPREPPQCAKSVYCREQGSGIRSVSFYEHIVTVGTGQGALLFYDIRAQRFLEDLTGSCREGDLLKLNTGKGWLNHNEMWMNYFSDIDSCPNAVYTHCYDSSGTKLFVAGGPLPTGLHGNYAGLWS</sequence>
<gene>
    <name type="primary">dcaf12-b</name>
    <name type="synonym">wdr40a-b</name>
</gene>
<dbReference type="EMBL" id="BC079715">
    <property type="protein sequence ID" value="AAH79715.1"/>
    <property type="molecule type" value="mRNA"/>
</dbReference>
<dbReference type="RefSeq" id="NP_001087395.1">
    <property type="nucleotide sequence ID" value="NM_001093926.1"/>
</dbReference>
<dbReference type="SMR" id="Q6AX81"/>
<dbReference type="DNASU" id="447219"/>
<dbReference type="GeneID" id="447219"/>
<dbReference type="KEGG" id="xla:447219"/>
<dbReference type="AGR" id="Xenbase:XB-GENE-6254146"/>
<dbReference type="CTD" id="447219"/>
<dbReference type="Xenbase" id="XB-GENE-6254146">
    <property type="gene designation" value="dcaf12.S"/>
</dbReference>
<dbReference type="OMA" id="GGEQYGW"/>
<dbReference type="OrthoDB" id="9610195at2759"/>
<dbReference type="UniPathway" id="UPA00143"/>
<dbReference type="Proteomes" id="UP000186698">
    <property type="component" value="Chromosome 1S"/>
</dbReference>
<dbReference type="Bgee" id="447219">
    <property type="expression patterns" value="Expressed in testis and 19 other cell types or tissues"/>
</dbReference>
<dbReference type="GO" id="GO:0005813">
    <property type="term" value="C:centrosome"/>
    <property type="evidence" value="ECO:0007669"/>
    <property type="project" value="UniProtKB-SubCell"/>
</dbReference>
<dbReference type="GO" id="GO:0080008">
    <property type="term" value="C:Cul4-RING E3 ubiquitin ligase complex"/>
    <property type="evidence" value="ECO:0000250"/>
    <property type="project" value="UniProtKB"/>
</dbReference>
<dbReference type="GO" id="GO:0005737">
    <property type="term" value="C:cytoplasm"/>
    <property type="evidence" value="ECO:0007669"/>
    <property type="project" value="UniProtKB-SubCell"/>
</dbReference>
<dbReference type="GO" id="GO:0005634">
    <property type="term" value="C:nucleus"/>
    <property type="evidence" value="ECO:0007669"/>
    <property type="project" value="UniProtKB-SubCell"/>
</dbReference>
<dbReference type="GO" id="GO:1990756">
    <property type="term" value="F:ubiquitin-like ligase-substrate adaptor activity"/>
    <property type="evidence" value="ECO:0000250"/>
    <property type="project" value="UniProtKB"/>
</dbReference>
<dbReference type="GO" id="GO:0016567">
    <property type="term" value="P:protein ubiquitination"/>
    <property type="evidence" value="ECO:0007669"/>
    <property type="project" value="UniProtKB-UniPathway"/>
</dbReference>
<dbReference type="GO" id="GO:0010506">
    <property type="term" value="P:regulation of autophagy"/>
    <property type="evidence" value="ECO:0000250"/>
    <property type="project" value="UniProtKB"/>
</dbReference>
<dbReference type="GO" id="GO:0140627">
    <property type="term" value="P:ubiquitin-dependent protein catabolic process via the C-end degron rule pathway"/>
    <property type="evidence" value="ECO:0000250"/>
    <property type="project" value="UniProtKB"/>
</dbReference>
<dbReference type="FunFam" id="2.130.10.10:FF:001190">
    <property type="entry name" value="DDB1 and CUL4 associated factor 12"/>
    <property type="match status" value="1"/>
</dbReference>
<dbReference type="FunFam" id="2.130.10.10:FF:000253">
    <property type="entry name" value="DDB1- and CUL4-associated factor 12"/>
    <property type="match status" value="1"/>
</dbReference>
<dbReference type="Gene3D" id="2.130.10.10">
    <property type="entry name" value="YVTN repeat-like/Quinoprotein amine dehydrogenase"/>
    <property type="match status" value="2"/>
</dbReference>
<dbReference type="InterPro" id="IPR056151">
    <property type="entry name" value="Beta-prop_DCAF12"/>
</dbReference>
<dbReference type="InterPro" id="IPR051191">
    <property type="entry name" value="DCAF12"/>
</dbReference>
<dbReference type="InterPro" id="IPR015943">
    <property type="entry name" value="WD40/YVTN_repeat-like_dom_sf"/>
</dbReference>
<dbReference type="InterPro" id="IPR019775">
    <property type="entry name" value="WD40_repeat_CS"/>
</dbReference>
<dbReference type="InterPro" id="IPR036322">
    <property type="entry name" value="WD40_repeat_dom_sf"/>
</dbReference>
<dbReference type="InterPro" id="IPR001680">
    <property type="entry name" value="WD40_rpt"/>
</dbReference>
<dbReference type="PANTHER" id="PTHR19860:SF16">
    <property type="entry name" value="DDB1- AND CUL4-ASSOCIATED FACTOR 12"/>
    <property type="match status" value="1"/>
</dbReference>
<dbReference type="PANTHER" id="PTHR19860">
    <property type="entry name" value="DDB1- AND CUL4-ASSOCIATED FACTOR 12-RELATED"/>
    <property type="match status" value="1"/>
</dbReference>
<dbReference type="Pfam" id="PF23760">
    <property type="entry name" value="Beta-prop_DCAF12"/>
    <property type="match status" value="1"/>
</dbReference>
<dbReference type="SMART" id="SM00320">
    <property type="entry name" value="WD40"/>
    <property type="match status" value="4"/>
</dbReference>
<dbReference type="SUPFAM" id="SSF50978">
    <property type="entry name" value="WD40 repeat-like"/>
    <property type="match status" value="1"/>
</dbReference>
<dbReference type="PROSITE" id="PS00678">
    <property type="entry name" value="WD_REPEATS_1"/>
    <property type="match status" value="1"/>
</dbReference>
<dbReference type="PROSITE" id="PS50082">
    <property type="entry name" value="WD_REPEATS_2"/>
    <property type="match status" value="1"/>
</dbReference>
<dbReference type="PROSITE" id="PS50294">
    <property type="entry name" value="WD_REPEATS_REGION"/>
    <property type="match status" value="1"/>
</dbReference>
<protein>
    <recommendedName>
        <fullName evidence="3">DDB1- and CUL4-associated factor 12-B</fullName>
    </recommendedName>
    <alternativeName>
        <fullName>WD repeat-containing protein 40A-B</fullName>
    </alternativeName>
</protein>
<organism>
    <name type="scientific">Xenopus laevis</name>
    <name type="common">African clawed frog</name>
    <dbReference type="NCBI Taxonomy" id="8355"/>
    <lineage>
        <taxon>Eukaryota</taxon>
        <taxon>Metazoa</taxon>
        <taxon>Chordata</taxon>
        <taxon>Craniata</taxon>
        <taxon>Vertebrata</taxon>
        <taxon>Euteleostomi</taxon>
        <taxon>Amphibia</taxon>
        <taxon>Batrachia</taxon>
        <taxon>Anura</taxon>
        <taxon>Pipoidea</taxon>
        <taxon>Pipidae</taxon>
        <taxon>Xenopodinae</taxon>
        <taxon>Xenopus</taxon>
        <taxon>Xenopus</taxon>
    </lineage>
</organism>
<proteinExistence type="evidence at transcript level"/>
<keyword id="KW-0963">Cytoplasm</keyword>
<keyword id="KW-0206">Cytoskeleton</keyword>
<keyword id="KW-0539">Nucleus</keyword>
<keyword id="KW-1185">Reference proteome</keyword>
<keyword id="KW-0677">Repeat</keyword>
<keyword id="KW-0833">Ubl conjugation pathway</keyword>
<keyword id="KW-0853">WD repeat</keyword>
<name>DC12B_XENLA</name>
<reference key="1">
    <citation type="submission" date="2004-08" db="EMBL/GenBank/DDBJ databases">
        <authorList>
            <consortium name="NIH - Xenopus Gene Collection (XGC) project"/>
        </authorList>
    </citation>
    <scope>NUCLEOTIDE SEQUENCE [LARGE SCALE MRNA]</scope>
    <source>
        <tissue>Kidney</tissue>
    </source>
</reference>
<accession>Q6AX81</accession>
<evidence type="ECO:0000250" key="1">
    <source>
        <dbReference type="UniProtKB" id="Q5T6F0"/>
    </source>
</evidence>
<evidence type="ECO:0000256" key="2">
    <source>
        <dbReference type="SAM" id="MobiDB-lite"/>
    </source>
</evidence>
<evidence type="ECO:0000305" key="3"/>